<name>RS9_BACSU</name>
<accession>P21470</accession>
<keyword id="KW-0002">3D-structure</keyword>
<keyword id="KW-0903">Direct protein sequencing</keyword>
<keyword id="KW-1185">Reference proteome</keyword>
<keyword id="KW-0687">Ribonucleoprotein</keyword>
<keyword id="KW-0689">Ribosomal protein</keyword>
<organism>
    <name type="scientific">Bacillus subtilis (strain 168)</name>
    <dbReference type="NCBI Taxonomy" id="224308"/>
    <lineage>
        <taxon>Bacteria</taxon>
        <taxon>Bacillati</taxon>
        <taxon>Bacillota</taxon>
        <taxon>Bacilli</taxon>
        <taxon>Bacillales</taxon>
        <taxon>Bacillaceae</taxon>
        <taxon>Bacillus</taxon>
    </lineage>
</organism>
<dbReference type="EMBL" id="D64126">
    <property type="protein sequence ID" value="BAA10989.1"/>
    <property type="molecule type" value="Genomic_DNA"/>
</dbReference>
<dbReference type="EMBL" id="AL009126">
    <property type="protein sequence ID" value="CAB11926.1"/>
    <property type="molecule type" value="Genomic_DNA"/>
</dbReference>
<dbReference type="PIR" id="H69699">
    <property type="entry name" value="H69699"/>
</dbReference>
<dbReference type="RefSeq" id="NP_388031.1">
    <property type="nucleotide sequence ID" value="NC_000964.3"/>
</dbReference>
<dbReference type="RefSeq" id="WP_004399691.1">
    <property type="nucleotide sequence ID" value="NZ_OZ025638.1"/>
</dbReference>
<dbReference type="PDB" id="3J9W">
    <property type="method" value="EM"/>
    <property type="resolution" value="3.90 A"/>
    <property type="chains" value="AI=1-130"/>
</dbReference>
<dbReference type="PDB" id="5NJT">
    <property type="method" value="EM"/>
    <property type="resolution" value="3.80 A"/>
    <property type="chains" value="I=1-130"/>
</dbReference>
<dbReference type="PDB" id="6HA1">
    <property type="method" value="EM"/>
    <property type="resolution" value="3.10 A"/>
    <property type="chains" value="i=1-130"/>
</dbReference>
<dbReference type="PDB" id="6HA8">
    <property type="method" value="EM"/>
    <property type="resolution" value="3.50 A"/>
    <property type="chains" value="i=1-130"/>
</dbReference>
<dbReference type="PDB" id="6HTQ">
    <property type="method" value="EM"/>
    <property type="resolution" value="4.50 A"/>
    <property type="chains" value="i=5-129"/>
</dbReference>
<dbReference type="PDB" id="7O5B">
    <property type="method" value="EM"/>
    <property type="resolution" value="3.33 A"/>
    <property type="chains" value="I=1-130"/>
</dbReference>
<dbReference type="PDB" id="7QGU">
    <property type="method" value="EM"/>
    <property type="resolution" value="4.75 A"/>
    <property type="chains" value="n=1-130"/>
</dbReference>
<dbReference type="PDB" id="7QH4">
    <property type="method" value="EM"/>
    <property type="resolution" value="5.45 A"/>
    <property type="chains" value="m=1-130"/>
</dbReference>
<dbReference type="PDB" id="7QV1">
    <property type="method" value="EM"/>
    <property type="resolution" value="3.50 A"/>
    <property type="chains" value="i=1-130"/>
</dbReference>
<dbReference type="PDB" id="7QV2">
    <property type="method" value="EM"/>
    <property type="resolution" value="3.50 A"/>
    <property type="chains" value="i=1-130"/>
</dbReference>
<dbReference type="PDB" id="7QV3">
    <property type="method" value="EM"/>
    <property type="resolution" value="5.14 A"/>
    <property type="chains" value="i=1-130"/>
</dbReference>
<dbReference type="PDB" id="8BUU">
    <property type="method" value="EM"/>
    <property type="resolution" value="2.90 A"/>
    <property type="chains" value="i=1-130"/>
</dbReference>
<dbReference type="PDB" id="8CDU">
    <property type="method" value="EM"/>
    <property type="resolution" value="3.10 A"/>
    <property type="chains" value="J=1-130"/>
</dbReference>
<dbReference type="PDB" id="8CDV">
    <property type="method" value="EM"/>
    <property type="resolution" value="4.73 A"/>
    <property type="chains" value="J=1-130"/>
</dbReference>
<dbReference type="PDB" id="8CEC">
    <property type="method" value="EM"/>
    <property type="resolution" value="3.57 A"/>
    <property type="chains" value="N=1-130"/>
</dbReference>
<dbReference type="PDB" id="8CED">
    <property type="method" value="EM"/>
    <property type="resolution" value="4.15 A"/>
    <property type="chains" value="J=1-130"/>
</dbReference>
<dbReference type="PDB" id="8CEE">
    <property type="method" value="EM"/>
    <property type="resolution" value="3.70 A"/>
    <property type="chains" value="J=1-130"/>
</dbReference>
<dbReference type="PDB" id="8QCQ">
    <property type="method" value="EM"/>
    <property type="resolution" value="2.30 A"/>
    <property type="chains" value="i=1-130"/>
</dbReference>
<dbReference type="PDB" id="8QPP">
    <property type="method" value="EM"/>
    <property type="resolution" value="3.40 A"/>
    <property type="chains" value="I=1-130"/>
</dbReference>
<dbReference type="PDB" id="8R55">
    <property type="method" value="EM"/>
    <property type="resolution" value="3.57 A"/>
    <property type="chains" value="I=1-130"/>
</dbReference>
<dbReference type="PDBsum" id="3J9W"/>
<dbReference type="PDBsum" id="5NJT"/>
<dbReference type="PDBsum" id="6HA1"/>
<dbReference type="PDBsum" id="6HA8"/>
<dbReference type="PDBsum" id="6HTQ"/>
<dbReference type="PDBsum" id="7O5B"/>
<dbReference type="PDBsum" id="7QGU"/>
<dbReference type="PDBsum" id="7QH4"/>
<dbReference type="PDBsum" id="7QV1"/>
<dbReference type="PDBsum" id="7QV2"/>
<dbReference type="PDBsum" id="7QV3"/>
<dbReference type="PDBsum" id="8BUU"/>
<dbReference type="PDBsum" id="8CDU"/>
<dbReference type="PDBsum" id="8CDV"/>
<dbReference type="PDBsum" id="8CEC"/>
<dbReference type="PDBsum" id="8CED"/>
<dbReference type="PDBsum" id="8CEE"/>
<dbReference type="PDBsum" id="8QCQ"/>
<dbReference type="PDBsum" id="8QPP"/>
<dbReference type="PDBsum" id="8R55"/>
<dbReference type="EMDB" id="EMD-0176"/>
<dbReference type="EMDB" id="EMD-0177"/>
<dbReference type="EMDB" id="EMD-0270"/>
<dbReference type="EMDB" id="EMD-12734"/>
<dbReference type="EMDB" id="EMD-14157"/>
<dbReference type="EMDB" id="EMD-14158"/>
<dbReference type="EMDB" id="EMD-14159"/>
<dbReference type="EMDB" id="EMD-16246"/>
<dbReference type="EMDB" id="EMD-16595"/>
<dbReference type="EMDB" id="EMD-16596"/>
<dbReference type="EMDB" id="EMD-16605"/>
<dbReference type="EMDB" id="EMD-16606"/>
<dbReference type="EMDB" id="EMD-16607"/>
<dbReference type="EMDB" id="EMD-18332"/>
<dbReference type="EMDB" id="EMD-3656"/>
<dbReference type="SMR" id="P21470"/>
<dbReference type="FunCoup" id="P21470">
    <property type="interactions" value="782"/>
</dbReference>
<dbReference type="STRING" id="224308.BSU01500"/>
<dbReference type="jPOST" id="P21470"/>
<dbReference type="PaxDb" id="224308-BSU01500"/>
<dbReference type="EnsemblBacteria" id="CAB11926">
    <property type="protein sequence ID" value="CAB11926"/>
    <property type="gene ID" value="BSU_01500"/>
</dbReference>
<dbReference type="GeneID" id="86875451"/>
<dbReference type="GeneID" id="938912"/>
<dbReference type="KEGG" id="bsu:BSU01500"/>
<dbReference type="PATRIC" id="fig|224308.179.peg.154"/>
<dbReference type="eggNOG" id="COG0103">
    <property type="taxonomic scope" value="Bacteria"/>
</dbReference>
<dbReference type="InParanoid" id="P21470"/>
<dbReference type="OrthoDB" id="9803965at2"/>
<dbReference type="PhylomeDB" id="P21470"/>
<dbReference type="BioCyc" id="BSUB:BSU01500-MONOMER"/>
<dbReference type="PRO" id="PR:P21470"/>
<dbReference type="Proteomes" id="UP000001570">
    <property type="component" value="Chromosome"/>
</dbReference>
<dbReference type="GO" id="GO:0022627">
    <property type="term" value="C:cytosolic small ribosomal subunit"/>
    <property type="evidence" value="ECO:0000318"/>
    <property type="project" value="GO_Central"/>
</dbReference>
<dbReference type="GO" id="GO:0003723">
    <property type="term" value="F:RNA binding"/>
    <property type="evidence" value="ECO:0000318"/>
    <property type="project" value="GO_Central"/>
</dbReference>
<dbReference type="GO" id="GO:0003735">
    <property type="term" value="F:structural constituent of ribosome"/>
    <property type="evidence" value="ECO:0000318"/>
    <property type="project" value="GO_Central"/>
</dbReference>
<dbReference type="GO" id="GO:0006412">
    <property type="term" value="P:translation"/>
    <property type="evidence" value="ECO:0007669"/>
    <property type="project" value="UniProtKB-UniRule"/>
</dbReference>
<dbReference type="FunFam" id="3.30.230.10:FF:000001">
    <property type="entry name" value="30S ribosomal protein S9"/>
    <property type="match status" value="1"/>
</dbReference>
<dbReference type="Gene3D" id="3.30.230.10">
    <property type="match status" value="1"/>
</dbReference>
<dbReference type="HAMAP" id="MF_00532_B">
    <property type="entry name" value="Ribosomal_uS9_B"/>
    <property type="match status" value="1"/>
</dbReference>
<dbReference type="InterPro" id="IPR020568">
    <property type="entry name" value="Ribosomal_Su5_D2-typ_SF"/>
</dbReference>
<dbReference type="InterPro" id="IPR000754">
    <property type="entry name" value="Ribosomal_uS9"/>
</dbReference>
<dbReference type="InterPro" id="IPR023035">
    <property type="entry name" value="Ribosomal_uS9_bac/plastid"/>
</dbReference>
<dbReference type="InterPro" id="IPR020574">
    <property type="entry name" value="Ribosomal_uS9_CS"/>
</dbReference>
<dbReference type="InterPro" id="IPR014721">
    <property type="entry name" value="Ribsml_uS5_D2-typ_fold_subgr"/>
</dbReference>
<dbReference type="NCBIfam" id="NF001099">
    <property type="entry name" value="PRK00132.1"/>
    <property type="match status" value="1"/>
</dbReference>
<dbReference type="PANTHER" id="PTHR21569">
    <property type="entry name" value="RIBOSOMAL PROTEIN S9"/>
    <property type="match status" value="1"/>
</dbReference>
<dbReference type="PANTHER" id="PTHR21569:SF1">
    <property type="entry name" value="SMALL RIBOSOMAL SUBUNIT PROTEIN US9M"/>
    <property type="match status" value="1"/>
</dbReference>
<dbReference type="Pfam" id="PF00380">
    <property type="entry name" value="Ribosomal_S9"/>
    <property type="match status" value="1"/>
</dbReference>
<dbReference type="SUPFAM" id="SSF54211">
    <property type="entry name" value="Ribosomal protein S5 domain 2-like"/>
    <property type="match status" value="1"/>
</dbReference>
<dbReference type="PROSITE" id="PS00360">
    <property type="entry name" value="RIBOSOMAL_S9"/>
    <property type="match status" value="1"/>
</dbReference>
<feature type="initiator methionine" description="Removed" evidence="2">
    <location>
        <position position="1"/>
    </location>
</feature>
<feature type="chain" id="PRO_0000111326" description="Small ribosomal subunit protein uS9">
    <location>
        <begin position="2"/>
        <end position="130"/>
    </location>
</feature>
<feature type="strand" evidence="6">
    <location>
        <begin position="6"/>
        <end position="12"/>
    </location>
</feature>
<feature type="strand" evidence="6">
    <location>
        <begin position="15"/>
        <end position="26"/>
    </location>
</feature>
<feature type="strand" evidence="6">
    <location>
        <begin position="28"/>
        <end position="34"/>
    </location>
</feature>
<feature type="helix" evidence="6">
    <location>
        <begin position="35"/>
        <end position="38"/>
    </location>
</feature>
<feature type="helix" evidence="6">
    <location>
        <begin position="42"/>
        <end position="54"/>
    </location>
</feature>
<feature type="turn" evidence="6">
    <location>
        <begin position="58"/>
        <end position="60"/>
    </location>
</feature>
<feature type="strand" evidence="6">
    <location>
        <begin position="61"/>
        <end position="70"/>
    </location>
</feature>
<feature type="helix" evidence="6">
    <location>
        <begin position="72"/>
        <end position="90"/>
    </location>
</feature>
<feature type="helix" evidence="6">
    <location>
        <begin position="92"/>
        <end position="94"/>
    </location>
</feature>
<feature type="helix" evidence="6">
    <location>
        <begin position="95"/>
        <end position="100"/>
    </location>
</feature>
<comment type="subunit">
    <text evidence="1">Part of the 30S ribosomal subunit.</text>
</comment>
<comment type="similarity">
    <text evidence="3">Belongs to the universal ribosomal protein uS9 family.</text>
</comment>
<proteinExistence type="evidence at protein level"/>
<gene>
    <name type="primary">rpsI</name>
    <name type="ordered locus">BSU01500</name>
</gene>
<protein>
    <recommendedName>
        <fullName evidence="3">Small ribosomal subunit protein uS9</fullName>
    </recommendedName>
    <alternativeName>
        <fullName>30S ribosomal protein S9</fullName>
    </alternativeName>
    <alternativeName>
        <fullName>BS10</fullName>
    </alternativeName>
</protein>
<sequence length="130" mass="14308">MAQVQYYGTGRRKSSVARVRLVPGEGRIVVNNREISEHIPSAALIEDIKQPLTLTETAGTYDVLVNVHGGGLSGQAGAIRHGIARALLEADPEYRTTLKRAGLLTRDARMKERKKYGLKGARRAPQFSKR</sequence>
<reference key="1">
    <citation type="journal article" date="1996" name="Microbiology">
        <title>Sequence analysis of a 50 kb region between spo0H and rrnH on the Bacillus subtilis chromosome.</title>
        <authorList>
            <person name="Yasumoto K."/>
            <person name="Liu H."/>
            <person name="Jeong S.M."/>
            <person name="Ohashi Y."/>
            <person name="Kakinuma S."/>
            <person name="Tanaka K."/>
            <person name="Kawamura F."/>
            <person name="Yoshikawa H."/>
            <person name="Takahashi H."/>
        </authorList>
    </citation>
    <scope>NUCLEOTIDE SEQUENCE [GENOMIC DNA]</scope>
    <source>
        <strain>168</strain>
    </source>
</reference>
<reference key="2">
    <citation type="journal article" date="1997" name="Nature">
        <title>The complete genome sequence of the Gram-positive bacterium Bacillus subtilis.</title>
        <authorList>
            <person name="Kunst F."/>
            <person name="Ogasawara N."/>
            <person name="Moszer I."/>
            <person name="Albertini A.M."/>
            <person name="Alloni G."/>
            <person name="Azevedo V."/>
            <person name="Bertero M.G."/>
            <person name="Bessieres P."/>
            <person name="Bolotin A."/>
            <person name="Borchert S."/>
            <person name="Borriss R."/>
            <person name="Boursier L."/>
            <person name="Brans A."/>
            <person name="Braun M."/>
            <person name="Brignell S.C."/>
            <person name="Bron S."/>
            <person name="Brouillet S."/>
            <person name="Bruschi C.V."/>
            <person name="Caldwell B."/>
            <person name="Capuano V."/>
            <person name="Carter N.M."/>
            <person name="Choi S.-K."/>
            <person name="Codani J.-J."/>
            <person name="Connerton I.F."/>
            <person name="Cummings N.J."/>
            <person name="Daniel R.A."/>
            <person name="Denizot F."/>
            <person name="Devine K.M."/>
            <person name="Duesterhoeft A."/>
            <person name="Ehrlich S.D."/>
            <person name="Emmerson P.T."/>
            <person name="Entian K.-D."/>
            <person name="Errington J."/>
            <person name="Fabret C."/>
            <person name="Ferrari E."/>
            <person name="Foulger D."/>
            <person name="Fritz C."/>
            <person name="Fujita M."/>
            <person name="Fujita Y."/>
            <person name="Fuma S."/>
            <person name="Galizzi A."/>
            <person name="Galleron N."/>
            <person name="Ghim S.-Y."/>
            <person name="Glaser P."/>
            <person name="Goffeau A."/>
            <person name="Golightly E.J."/>
            <person name="Grandi G."/>
            <person name="Guiseppi G."/>
            <person name="Guy B.J."/>
            <person name="Haga K."/>
            <person name="Haiech J."/>
            <person name="Harwood C.R."/>
            <person name="Henaut A."/>
            <person name="Hilbert H."/>
            <person name="Holsappel S."/>
            <person name="Hosono S."/>
            <person name="Hullo M.-F."/>
            <person name="Itaya M."/>
            <person name="Jones L.-M."/>
            <person name="Joris B."/>
            <person name="Karamata D."/>
            <person name="Kasahara Y."/>
            <person name="Klaerr-Blanchard M."/>
            <person name="Klein C."/>
            <person name="Kobayashi Y."/>
            <person name="Koetter P."/>
            <person name="Koningstein G."/>
            <person name="Krogh S."/>
            <person name="Kumano M."/>
            <person name="Kurita K."/>
            <person name="Lapidus A."/>
            <person name="Lardinois S."/>
            <person name="Lauber J."/>
            <person name="Lazarevic V."/>
            <person name="Lee S.-M."/>
            <person name="Levine A."/>
            <person name="Liu H."/>
            <person name="Masuda S."/>
            <person name="Mauel C."/>
            <person name="Medigue C."/>
            <person name="Medina N."/>
            <person name="Mellado R.P."/>
            <person name="Mizuno M."/>
            <person name="Moestl D."/>
            <person name="Nakai S."/>
            <person name="Noback M."/>
            <person name="Noone D."/>
            <person name="O'Reilly M."/>
            <person name="Ogawa K."/>
            <person name="Ogiwara A."/>
            <person name="Oudega B."/>
            <person name="Park S.-H."/>
            <person name="Parro V."/>
            <person name="Pohl T.M."/>
            <person name="Portetelle D."/>
            <person name="Porwollik S."/>
            <person name="Prescott A.M."/>
            <person name="Presecan E."/>
            <person name="Pujic P."/>
            <person name="Purnelle B."/>
            <person name="Rapoport G."/>
            <person name="Rey M."/>
            <person name="Reynolds S."/>
            <person name="Rieger M."/>
            <person name="Rivolta C."/>
            <person name="Rocha E."/>
            <person name="Roche B."/>
            <person name="Rose M."/>
            <person name="Sadaie Y."/>
            <person name="Sato T."/>
            <person name="Scanlan E."/>
            <person name="Schleich S."/>
            <person name="Schroeter R."/>
            <person name="Scoffone F."/>
            <person name="Sekiguchi J."/>
            <person name="Sekowska A."/>
            <person name="Seror S.J."/>
            <person name="Serror P."/>
            <person name="Shin B.-S."/>
            <person name="Soldo B."/>
            <person name="Sorokin A."/>
            <person name="Tacconi E."/>
            <person name="Takagi T."/>
            <person name="Takahashi H."/>
            <person name="Takemaru K."/>
            <person name="Takeuchi M."/>
            <person name="Tamakoshi A."/>
            <person name="Tanaka T."/>
            <person name="Terpstra P."/>
            <person name="Tognoni A."/>
            <person name="Tosato V."/>
            <person name="Uchiyama S."/>
            <person name="Vandenbol M."/>
            <person name="Vannier F."/>
            <person name="Vassarotti A."/>
            <person name="Viari A."/>
            <person name="Wambutt R."/>
            <person name="Wedler E."/>
            <person name="Wedler H."/>
            <person name="Weitzenegger T."/>
            <person name="Winters P."/>
            <person name="Wipat A."/>
            <person name="Yamamoto H."/>
            <person name="Yamane K."/>
            <person name="Yasumoto K."/>
            <person name="Yata K."/>
            <person name="Yoshida K."/>
            <person name="Yoshikawa H.-F."/>
            <person name="Zumstein E."/>
            <person name="Yoshikawa H."/>
            <person name="Danchin A."/>
        </authorList>
    </citation>
    <scope>NUCLEOTIDE SEQUENCE [LARGE SCALE GENOMIC DNA]</scope>
    <source>
        <strain>168</strain>
    </source>
</reference>
<reference key="3">
    <citation type="journal article" date="1982" name="Mol. Gen. Genet.">
        <title>Purification and characterization of 30S ribosomal proteins from Bacillus subtilis: correlation to Escherichia coli 30S proteins.</title>
        <authorList>
            <person name="Higo K."/>
            <person name="Otaka E."/>
            <person name="Osawa S."/>
        </authorList>
    </citation>
    <scope>PROTEIN SEQUENCE OF 2-11</scope>
</reference>
<reference evidence="4 5" key="4">
    <citation type="journal article" date="2018" name="Proc. Natl. Acad. Sci. U.S.A.">
        <title>Structural basis for antibiotic resistance mediated by the Bacillus subtilis ABCF ATPase VmlR.</title>
        <authorList>
            <person name="Crowe-McAuliffe C."/>
            <person name="Graf M."/>
            <person name="Huter P."/>
            <person name="Takada H."/>
            <person name="Abdelshahid M."/>
            <person name="Novacek J."/>
            <person name="Murina V."/>
            <person name="Atkinson G.C."/>
            <person name="Hauryliuk V."/>
            <person name="Wilson D.N."/>
        </authorList>
    </citation>
    <scope>STRUCTURE BY ELECTRON MICROSCOPY (3.10 ANGSTROMS) OF 1-130 WITH AND WITHOUT VIRGINIAMYCIN M</scope>
    <scope>SUBUNIT</scope>
</reference>
<evidence type="ECO:0000269" key="1">
    <source>
    </source>
</evidence>
<evidence type="ECO:0000269" key="2">
    <source>
    </source>
</evidence>
<evidence type="ECO:0000305" key="3"/>
<evidence type="ECO:0007744" key="4">
    <source>
        <dbReference type="PDB" id="6HA1"/>
    </source>
</evidence>
<evidence type="ECO:0007744" key="5">
    <source>
        <dbReference type="PDB" id="6HA8"/>
    </source>
</evidence>
<evidence type="ECO:0007829" key="6">
    <source>
        <dbReference type="PDB" id="8CDU"/>
    </source>
</evidence>